<dbReference type="EC" id="2.4.2.7" evidence="1"/>
<dbReference type="EMBL" id="CP000885">
    <property type="protein sequence ID" value="ABX40934.1"/>
    <property type="molecule type" value="Genomic_DNA"/>
</dbReference>
<dbReference type="RefSeq" id="WP_012198578.1">
    <property type="nucleotide sequence ID" value="NC_010001.1"/>
</dbReference>
<dbReference type="SMR" id="A9KIA0"/>
<dbReference type="STRING" id="357809.Cphy_0547"/>
<dbReference type="KEGG" id="cpy:Cphy_0547"/>
<dbReference type="eggNOG" id="COG0503">
    <property type="taxonomic scope" value="Bacteria"/>
</dbReference>
<dbReference type="HOGENOM" id="CLU_063339_3_0_9"/>
<dbReference type="OrthoDB" id="9803963at2"/>
<dbReference type="UniPathway" id="UPA00588">
    <property type="reaction ID" value="UER00646"/>
</dbReference>
<dbReference type="Proteomes" id="UP000000370">
    <property type="component" value="Chromosome"/>
</dbReference>
<dbReference type="GO" id="GO:0005737">
    <property type="term" value="C:cytoplasm"/>
    <property type="evidence" value="ECO:0007669"/>
    <property type="project" value="UniProtKB-SubCell"/>
</dbReference>
<dbReference type="GO" id="GO:0002055">
    <property type="term" value="F:adenine binding"/>
    <property type="evidence" value="ECO:0007669"/>
    <property type="project" value="TreeGrafter"/>
</dbReference>
<dbReference type="GO" id="GO:0003999">
    <property type="term" value="F:adenine phosphoribosyltransferase activity"/>
    <property type="evidence" value="ECO:0007669"/>
    <property type="project" value="UniProtKB-UniRule"/>
</dbReference>
<dbReference type="GO" id="GO:0016208">
    <property type="term" value="F:AMP binding"/>
    <property type="evidence" value="ECO:0007669"/>
    <property type="project" value="TreeGrafter"/>
</dbReference>
<dbReference type="GO" id="GO:0006168">
    <property type="term" value="P:adenine salvage"/>
    <property type="evidence" value="ECO:0007669"/>
    <property type="project" value="InterPro"/>
</dbReference>
<dbReference type="GO" id="GO:0044209">
    <property type="term" value="P:AMP salvage"/>
    <property type="evidence" value="ECO:0007669"/>
    <property type="project" value="UniProtKB-UniRule"/>
</dbReference>
<dbReference type="GO" id="GO:0006166">
    <property type="term" value="P:purine ribonucleoside salvage"/>
    <property type="evidence" value="ECO:0007669"/>
    <property type="project" value="UniProtKB-KW"/>
</dbReference>
<dbReference type="CDD" id="cd06223">
    <property type="entry name" value="PRTases_typeI"/>
    <property type="match status" value="1"/>
</dbReference>
<dbReference type="FunFam" id="3.40.50.2020:FF:000004">
    <property type="entry name" value="Adenine phosphoribosyltransferase"/>
    <property type="match status" value="1"/>
</dbReference>
<dbReference type="Gene3D" id="3.40.50.2020">
    <property type="match status" value="1"/>
</dbReference>
<dbReference type="HAMAP" id="MF_00004">
    <property type="entry name" value="Aden_phosphoribosyltr"/>
    <property type="match status" value="1"/>
</dbReference>
<dbReference type="InterPro" id="IPR005764">
    <property type="entry name" value="Ade_phspho_trans"/>
</dbReference>
<dbReference type="InterPro" id="IPR000836">
    <property type="entry name" value="PRibTrfase_dom"/>
</dbReference>
<dbReference type="InterPro" id="IPR029057">
    <property type="entry name" value="PRTase-like"/>
</dbReference>
<dbReference type="InterPro" id="IPR050054">
    <property type="entry name" value="UPRTase/APRTase"/>
</dbReference>
<dbReference type="NCBIfam" id="TIGR01090">
    <property type="entry name" value="apt"/>
    <property type="match status" value="1"/>
</dbReference>
<dbReference type="NCBIfam" id="NF002633">
    <property type="entry name" value="PRK02304.1-2"/>
    <property type="match status" value="1"/>
</dbReference>
<dbReference type="NCBIfam" id="NF002634">
    <property type="entry name" value="PRK02304.1-3"/>
    <property type="match status" value="1"/>
</dbReference>
<dbReference type="NCBIfam" id="NF002636">
    <property type="entry name" value="PRK02304.1-5"/>
    <property type="match status" value="1"/>
</dbReference>
<dbReference type="PANTHER" id="PTHR32315">
    <property type="entry name" value="ADENINE PHOSPHORIBOSYLTRANSFERASE"/>
    <property type="match status" value="1"/>
</dbReference>
<dbReference type="PANTHER" id="PTHR32315:SF3">
    <property type="entry name" value="ADENINE PHOSPHORIBOSYLTRANSFERASE"/>
    <property type="match status" value="1"/>
</dbReference>
<dbReference type="Pfam" id="PF00156">
    <property type="entry name" value="Pribosyltran"/>
    <property type="match status" value="1"/>
</dbReference>
<dbReference type="SUPFAM" id="SSF53271">
    <property type="entry name" value="PRTase-like"/>
    <property type="match status" value="1"/>
</dbReference>
<dbReference type="PROSITE" id="PS00103">
    <property type="entry name" value="PUR_PYR_PR_TRANSFER"/>
    <property type="match status" value="1"/>
</dbReference>
<reference key="1">
    <citation type="submission" date="2007-11" db="EMBL/GenBank/DDBJ databases">
        <title>Complete genome sequence of Clostridium phytofermentans ISDg.</title>
        <authorList>
            <person name="Leschine S.B."/>
            <person name="Warnick T.A."/>
            <person name="Blanchard J.L."/>
            <person name="Schnell D.J."/>
            <person name="Petit E.L."/>
            <person name="LaTouf W.G."/>
            <person name="Copeland A."/>
            <person name="Lucas S."/>
            <person name="Lapidus A."/>
            <person name="Barry K."/>
            <person name="Glavina del Rio T."/>
            <person name="Dalin E."/>
            <person name="Tice H."/>
            <person name="Pitluck S."/>
            <person name="Kiss H."/>
            <person name="Brettin T."/>
            <person name="Bruce D."/>
            <person name="Detter J.C."/>
            <person name="Han C."/>
            <person name="Kuske C."/>
            <person name="Schmutz J."/>
            <person name="Larimer F."/>
            <person name="Land M."/>
            <person name="Hauser L."/>
            <person name="Kyrpides N."/>
            <person name="Kim E.A."/>
            <person name="Richardson P."/>
        </authorList>
    </citation>
    <scope>NUCLEOTIDE SEQUENCE [LARGE SCALE GENOMIC DNA]</scope>
    <source>
        <strain>ATCC 700394 / DSM 18823 / ISDg</strain>
    </source>
</reference>
<feature type="chain" id="PRO_1000073790" description="Adenine phosphoribosyltransferase">
    <location>
        <begin position="1"/>
        <end position="174"/>
    </location>
</feature>
<proteinExistence type="inferred from homology"/>
<keyword id="KW-0963">Cytoplasm</keyword>
<keyword id="KW-0328">Glycosyltransferase</keyword>
<keyword id="KW-0660">Purine salvage</keyword>
<keyword id="KW-1185">Reference proteome</keyword>
<keyword id="KW-0808">Transferase</keyword>
<accession>A9KIA0</accession>
<sequence length="174" mass="19418">MKKLEEYVRSIPDFPEEGIIFRDVTSVLQDKDSLKMSIDQMQENLNGLDFDVIVGPESRGFIFGVPIAYNLNKAFIPVRKKGKLPCETVEMEYALEYGTATIEMHKDSIKPGQKVVIIDDLIATGGTIEAITKLIEQLGGEVVKIVFLMELEGLMGREKLKGYDIASVIKYAGK</sequence>
<organism>
    <name type="scientific">Lachnoclostridium phytofermentans (strain ATCC 700394 / DSM 18823 / ISDg)</name>
    <name type="common">Clostridium phytofermentans</name>
    <dbReference type="NCBI Taxonomy" id="357809"/>
    <lineage>
        <taxon>Bacteria</taxon>
        <taxon>Bacillati</taxon>
        <taxon>Bacillota</taxon>
        <taxon>Clostridia</taxon>
        <taxon>Lachnospirales</taxon>
        <taxon>Lachnospiraceae</taxon>
    </lineage>
</organism>
<evidence type="ECO:0000255" key="1">
    <source>
        <dbReference type="HAMAP-Rule" id="MF_00004"/>
    </source>
</evidence>
<name>APT_LACP7</name>
<comment type="function">
    <text evidence="1">Catalyzes a salvage reaction resulting in the formation of AMP, that is energically less costly than de novo synthesis.</text>
</comment>
<comment type="catalytic activity">
    <reaction evidence="1">
        <text>AMP + diphosphate = 5-phospho-alpha-D-ribose 1-diphosphate + adenine</text>
        <dbReference type="Rhea" id="RHEA:16609"/>
        <dbReference type="ChEBI" id="CHEBI:16708"/>
        <dbReference type="ChEBI" id="CHEBI:33019"/>
        <dbReference type="ChEBI" id="CHEBI:58017"/>
        <dbReference type="ChEBI" id="CHEBI:456215"/>
        <dbReference type="EC" id="2.4.2.7"/>
    </reaction>
</comment>
<comment type="pathway">
    <text evidence="1">Purine metabolism; AMP biosynthesis via salvage pathway; AMP from adenine: step 1/1.</text>
</comment>
<comment type="subunit">
    <text evidence="1">Homodimer.</text>
</comment>
<comment type="subcellular location">
    <subcellularLocation>
        <location evidence="1">Cytoplasm</location>
    </subcellularLocation>
</comment>
<comment type="similarity">
    <text evidence="1">Belongs to the purine/pyrimidine phosphoribosyltransferase family.</text>
</comment>
<protein>
    <recommendedName>
        <fullName evidence="1">Adenine phosphoribosyltransferase</fullName>
        <shortName evidence="1">APRT</shortName>
        <ecNumber evidence="1">2.4.2.7</ecNumber>
    </recommendedName>
</protein>
<gene>
    <name evidence="1" type="primary">apt</name>
    <name type="ordered locus">Cphy_0547</name>
</gene>